<accession>P0C1W5</accession>
<accession>C4PWC1</accession>
<name>CDKA_CONVX</name>
<comment type="function">
    <text evidence="2 4">Alpha-conotoxins act on postsynaptic membranes, they bind to the nicotinic acetylcholine receptors (nAChR) and thus inhibit them. Through its two C-terminal domains, this homodimeric protein would bind to two nAChR allosteric sites, located outside the nAChR C-loop of the principal binding face and at the adjacent binding interface in a clockwise direction (By similarity). This toxin specifically blocks mammalian neuronal nAChR of the alpha-7/CHRNA7, alpha-3-beta-2/CHRNA3-CHRNB2 (IC(50)=370 nM) and alpha-4-beta-2/CHRNA4-CHRNB2 subtypes (PubMed:16790424). VxXXB inhibits alpha-7/CHRNA7 and alpha-3-beta-2/CHRNA3-CHRNB2 nAChR subtypes with the highest efficiency, followed by VxXXA and VxXXC (PubMed:16790424). VxXXB and VxXXC inhibit the alpha-4-beta-2/CHRNA4-CHRNB2 nAChR subtype more efficiently than VxXXA (PubMed:16790424).</text>
</comment>
<comment type="subunit">
    <text evidence="4">Homodimer or pseudo-homodimer. Three dimers exist: homodimer of VxXXA, pseudo-homodimer of both VxXXA and [hydroxyPro-74]VxXXA and homodimer of [hydroxyPro-74]VxXXA. These three components exist in a 1:2:1 ratio.</text>
</comment>
<comment type="subcellular location">
    <subcellularLocation>
        <location evidence="4">Secreted</location>
    </subcellularLocation>
</comment>
<comment type="tissue specificity">
    <text evidence="8">Expressed by the venom duct.</text>
</comment>
<comment type="domain">
    <text evidence="7">The cysteine framework is XX (C-CC-C-CC-C-C-C-C).</text>
</comment>
<comment type="domain">
    <text evidence="2">Displays a mini-granulin fold, a structure composed of two short, stacked beta-hairpins connected by two parallel disulfide bonds. This newly described fold is derived from the same cysteine connectivity as knottins (ICK fold). The name 'mini-granulin fold' comes from the structural homology with the N-terminal region of the human granulin.</text>
</comment>
<comment type="PTM">
    <text evidence="4">VxXXA stands for the form with the Pro-55 hydroxylated. A second major form has both Pro-55 and Pro-74 hydroxylated. The two major forms VxXXA and [hydroxyPro-74]VxXXA exist in a 1:1 ratio.</text>
</comment>
<comment type="PTM">
    <text evidence="4">Minor forms are [hydroxyPro-70,hydroxyPro-74]VxXXA and [Pro-55]VxXXA.</text>
</comment>
<comment type="mass spectrometry" mass="5134.6" method="Electrospray" evidence="4">
    <text>With hydroxyPro-55.</text>
</comment>
<comment type="mass spectrometry" mass="5150.6" method="Electrospray" evidence="4">
    <text>With hydroxyPro-55 and hydroxyPro-74.</text>
</comment>
<comment type="similarity">
    <text evidence="7">Belongs to the conotoxin D superfamily.</text>
</comment>
<keyword id="KW-0008">Acetylcholine receptor inhibiting toxin</keyword>
<keyword id="KW-0903">Direct protein sequencing</keyword>
<keyword id="KW-1015">Disulfide bond</keyword>
<keyword id="KW-0379">Hydroxylation</keyword>
<keyword id="KW-0872">Ion channel impairing toxin</keyword>
<keyword id="KW-0528">Neurotoxin</keyword>
<keyword id="KW-0629">Postsynaptic neurotoxin</keyword>
<keyword id="KW-0964">Secreted</keyword>
<keyword id="KW-0732">Signal</keyword>
<keyword id="KW-0800">Toxin</keyword>
<sequence length="92" mass="10113">MPKLEMMLLVLLIFPLSYFIAAGGQVVQVDRRGDGLAGYLQRGDRDVQDCQVSTPGSKWGRCCLNRVCGPMCCPASHCYCVYHRGRGHGCSC</sequence>
<proteinExistence type="evidence at protein level"/>
<reference key="1">
    <citation type="journal article" date="2009" name="Biochemistry">
        <title>Novel alpha D-conopeptides and their precursors identified by cDNA cloning define the D-conotoxin superfamily.</title>
        <authorList>
            <person name="Loughnan M.L."/>
            <person name="Nicke A."/>
            <person name="Lawrence N."/>
            <person name="Lewis R.J."/>
        </authorList>
    </citation>
    <scope>NUCLEOTIDE SEQUENCE [MRNA]</scope>
    <source>
        <tissue>Venom duct</tissue>
    </source>
</reference>
<reference key="2">
    <citation type="journal article" date="2006" name="J. Biol. Chem.">
        <title>Identification of a novel class of nicotinic receptor antagonists: dimeric conotoxins VxXIIA, VxXIIB and VxXIIC from Conus vexillum.</title>
        <authorList>
            <person name="Loughnan M."/>
            <person name="Nicke A."/>
            <person name="Jones A."/>
            <person name="Schroeder C.I."/>
            <person name="Nevin S.T."/>
            <person name="Adams D.J."/>
            <person name="Alewood P.F."/>
            <person name="Lewis R.J."/>
        </authorList>
    </citation>
    <scope>PROTEIN SEQUENCE OF 46-92</scope>
    <scope>HYDROXYLATION AT PRO-55; PRO-70 AND PRO-74</scope>
    <scope>MASS SPECTROMETRY</scope>
    <scope>SUBUNIT</scope>
    <scope>STRUCTURE BY NMR</scope>
    <scope>FUNCTION</scope>
    <scope>SUBCELLULAR LOCATION</scope>
    <source>
        <tissue>Venom</tissue>
    </source>
</reference>
<organism>
    <name type="scientific">Conus vexillum</name>
    <name type="common">Flag cone</name>
    <dbReference type="NCBI Taxonomy" id="89431"/>
    <lineage>
        <taxon>Eukaryota</taxon>
        <taxon>Metazoa</taxon>
        <taxon>Spiralia</taxon>
        <taxon>Lophotrochozoa</taxon>
        <taxon>Mollusca</taxon>
        <taxon>Gastropoda</taxon>
        <taxon>Caenogastropoda</taxon>
        <taxon>Neogastropoda</taxon>
        <taxon>Conoidea</taxon>
        <taxon>Conidae</taxon>
        <taxon>Conus</taxon>
        <taxon>Rhizoconus</taxon>
    </lineage>
</organism>
<evidence type="ECO:0000250" key="1">
    <source>
        <dbReference type="UniProtKB" id="A0A0A0VBX4"/>
    </source>
</evidence>
<evidence type="ECO:0000250" key="2">
    <source>
        <dbReference type="UniProtKB" id="P0C1W6"/>
    </source>
</evidence>
<evidence type="ECO:0000255" key="3"/>
<evidence type="ECO:0000269" key="4">
    <source>
    </source>
</evidence>
<evidence type="ECO:0000303" key="5">
    <source>
    </source>
</evidence>
<evidence type="ECO:0000303" key="6">
    <source>
    </source>
</evidence>
<evidence type="ECO:0000305" key="7"/>
<evidence type="ECO:0000305" key="8">
    <source>
    </source>
</evidence>
<evidence type="ECO:0000312" key="9">
    <source>
        <dbReference type="EMBL" id="CAX51119.1"/>
    </source>
</evidence>
<dbReference type="EMBL" id="FN178633">
    <property type="protein sequence ID" value="CAX51119.1"/>
    <property type="molecule type" value="mRNA"/>
</dbReference>
<dbReference type="SMR" id="P0C1W5"/>
<dbReference type="ConoServer" id="1686">
    <property type="toxin name" value="VxXXA"/>
</dbReference>
<dbReference type="ConoServer" id="3630">
    <property type="toxin name" value="VxXXA precursor"/>
</dbReference>
<dbReference type="GO" id="GO:0005576">
    <property type="term" value="C:extracellular region"/>
    <property type="evidence" value="ECO:0007669"/>
    <property type="project" value="UniProtKB-SubCell"/>
</dbReference>
<dbReference type="GO" id="GO:0035792">
    <property type="term" value="C:host cell postsynaptic membrane"/>
    <property type="evidence" value="ECO:0007669"/>
    <property type="project" value="UniProtKB-KW"/>
</dbReference>
<dbReference type="GO" id="GO:0030550">
    <property type="term" value="F:acetylcholine receptor inhibitor activity"/>
    <property type="evidence" value="ECO:0007669"/>
    <property type="project" value="UniProtKB-KW"/>
</dbReference>
<dbReference type="GO" id="GO:0099106">
    <property type="term" value="F:ion channel regulator activity"/>
    <property type="evidence" value="ECO:0007669"/>
    <property type="project" value="UniProtKB-KW"/>
</dbReference>
<dbReference type="GO" id="GO:0090729">
    <property type="term" value="F:toxin activity"/>
    <property type="evidence" value="ECO:0007669"/>
    <property type="project" value="UniProtKB-KW"/>
</dbReference>
<feature type="signal peptide" evidence="3">
    <location>
        <begin position="1"/>
        <end position="24"/>
    </location>
</feature>
<feature type="propeptide" id="PRO_0000391782" evidence="4">
    <location>
        <begin position="25"/>
        <end position="45"/>
    </location>
</feature>
<feature type="chain" id="PRO_0000249793" description="Alpha-conotoxin VxXXA" evidence="4">
    <location>
        <begin position="46"/>
        <end position="92"/>
    </location>
</feature>
<feature type="modified residue" description="4-hydroxyproline; partial" evidence="4">
    <location>
        <position position="55"/>
    </location>
</feature>
<feature type="modified residue" description="4-hydroxyproline; partial" evidence="4">
    <location>
        <position position="70"/>
    </location>
</feature>
<feature type="modified residue" description="4-hydroxyproline; partial" evidence="4">
    <location>
        <position position="74"/>
    </location>
</feature>
<feature type="disulfide bond" description="Interchain (with C-63)" evidence="1">
    <location>
        <position position="50"/>
    </location>
</feature>
<feature type="disulfide bond" description="Interchain (with C-51)" evidence="1">
    <location>
        <position position="62"/>
    </location>
</feature>
<feature type="disulfide bond" evidence="1">
    <location>
        <begin position="63"/>
        <end position="72"/>
    </location>
</feature>
<feature type="disulfide bond" evidence="1">
    <location>
        <begin position="68"/>
        <end position="80"/>
    </location>
</feature>
<feature type="disulfide bond" evidence="1">
    <location>
        <begin position="73"/>
        <end position="90"/>
    </location>
</feature>
<feature type="disulfide bond" evidence="1">
    <location>
        <begin position="78"/>
        <end position="92"/>
    </location>
</feature>
<protein>
    <recommendedName>
        <fullName evidence="6">Alpha-conotoxin VxXXA</fullName>
    </recommendedName>
    <alternativeName>
        <fullName evidence="9">Vx20.1</fullName>
    </alternativeName>
    <alternativeName>
        <fullName evidence="5">VxXIIA</fullName>
    </alternativeName>
</protein>